<comment type="function">
    <text evidence="1">Transfers a GMP moiety from GTP to Mo-molybdopterin (Mo-MPT) cofactor (Moco or molybdenum cofactor) to form Mo-molybdopterin guanine dinucleotide (Mo-MGD) cofactor.</text>
</comment>
<comment type="catalytic activity">
    <reaction evidence="1">
        <text>Mo-molybdopterin + GTP + H(+) = Mo-molybdopterin guanine dinucleotide + diphosphate</text>
        <dbReference type="Rhea" id="RHEA:34243"/>
        <dbReference type="ChEBI" id="CHEBI:15378"/>
        <dbReference type="ChEBI" id="CHEBI:33019"/>
        <dbReference type="ChEBI" id="CHEBI:37565"/>
        <dbReference type="ChEBI" id="CHEBI:71302"/>
        <dbReference type="ChEBI" id="CHEBI:71310"/>
        <dbReference type="EC" id="2.7.7.77"/>
    </reaction>
</comment>
<comment type="cofactor">
    <cofactor evidence="1">
        <name>Mg(2+)</name>
        <dbReference type="ChEBI" id="CHEBI:18420"/>
    </cofactor>
</comment>
<comment type="subcellular location">
    <subcellularLocation>
        <location evidence="1">Cytoplasm</location>
    </subcellularLocation>
</comment>
<comment type="domain">
    <text evidence="1">The N-terminal domain determines nucleotide recognition and specific binding, while the C-terminal domain determines the specific binding to the target protein.</text>
</comment>
<comment type="similarity">
    <text evidence="1">Belongs to the MobA family.</text>
</comment>
<feature type="chain" id="PRO_1000115804" description="Probable molybdenum cofactor guanylyltransferase">
    <location>
        <begin position="1"/>
        <end position="205"/>
    </location>
</feature>
<feature type="binding site" evidence="1">
    <location>
        <begin position="10"/>
        <end position="12"/>
    </location>
    <ligand>
        <name>GTP</name>
        <dbReference type="ChEBI" id="CHEBI:37565"/>
    </ligand>
</feature>
<feature type="binding site" evidence="1">
    <location>
        <position position="22"/>
    </location>
    <ligand>
        <name>GTP</name>
        <dbReference type="ChEBI" id="CHEBI:37565"/>
    </ligand>
</feature>
<feature type="binding site" evidence="1">
    <location>
        <position position="69"/>
    </location>
    <ligand>
        <name>GTP</name>
        <dbReference type="ChEBI" id="CHEBI:37565"/>
    </ligand>
</feature>
<feature type="binding site" evidence="1">
    <location>
        <position position="100"/>
    </location>
    <ligand>
        <name>GTP</name>
        <dbReference type="ChEBI" id="CHEBI:37565"/>
    </ligand>
</feature>
<feature type="binding site" evidence="1">
    <location>
        <position position="100"/>
    </location>
    <ligand>
        <name>Mg(2+)</name>
        <dbReference type="ChEBI" id="CHEBI:18420"/>
    </ligand>
</feature>
<gene>
    <name evidence="1" type="primary">mobA</name>
    <name type="ordered locus">Nther_1264</name>
</gene>
<dbReference type="EC" id="2.7.7.77" evidence="1"/>
<dbReference type="EMBL" id="CP001034">
    <property type="protein sequence ID" value="ACB84847.1"/>
    <property type="molecule type" value="Genomic_DNA"/>
</dbReference>
<dbReference type="RefSeq" id="WP_012447722.1">
    <property type="nucleotide sequence ID" value="NC_010718.1"/>
</dbReference>
<dbReference type="SMR" id="B2A242"/>
<dbReference type="FunCoup" id="B2A242">
    <property type="interactions" value="114"/>
</dbReference>
<dbReference type="STRING" id="457570.Nther_1264"/>
<dbReference type="KEGG" id="nth:Nther_1264"/>
<dbReference type="eggNOG" id="COG0746">
    <property type="taxonomic scope" value="Bacteria"/>
</dbReference>
<dbReference type="HOGENOM" id="CLU_055597_2_1_9"/>
<dbReference type="InParanoid" id="B2A242"/>
<dbReference type="OrthoDB" id="9788394at2"/>
<dbReference type="Proteomes" id="UP000001683">
    <property type="component" value="Chromosome"/>
</dbReference>
<dbReference type="GO" id="GO:0005737">
    <property type="term" value="C:cytoplasm"/>
    <property type="evidence" value="ECO:0007669"/>
    <property type="project" value="UniProtKB-SubCell"/>
</dbReference>
<dbReference type="GO" id="GO:0005525">
    <property type="term" value="F:GTP binding"/>
    <property type="evidence" value="ECO:0007669"/>
    <property type="project" value="UniProtKB-UniRule"/>
</dbReference>
<dbReference type="GO" id="GO:0046872">
    <property type="term" value="F:metal ion binding"/>
    <property type="evidence" value="ECO:0007669"/>
    <property type="project" value="UniProtKB-KW"/>
</dbReference>
<dbReference type="GO" id="GO:0061603">
    <property type="term" value="F:molybdenum cofactor guanylyltransferase activity"/>
    <property type="evidence" value="ECO:0007669"/>
    <property type="project" value="UniProtKB-EC"/>
</dbReference>
<dbReference type="GO" id="GO:0006777">
    <property type="term" value="P:Mo-molybdopterin cofactor biosynthetic process"/>
    <property type="evidence" value="ECO:0007669"/>
    <property type="project" value="UniProtKB-KW"/>
</dbReference>
<dbReference type="CDD" id="cd02503">
    <property type="entry name" value="MobA"/>
    <property type="match status" value="1"/>
</dbReference>
<dbReference type="Gene3D" id="3.90.550.10">
    <property type="entry name" value="Spore Coat Polysaccharide Biosynthesis Protein SpsA, Chain A"/>
    <property type="match status" value="1"/>
</dbReference>
<dbReference type="HAMAP" id="MF_00316">
    <property type="entry name" value="MobA"/>
    <property type="match status" value="1"/>
</dbReference>
<dbReference type="InterPro" id="IPR025877">
    <property type="entry name" value="MobA-like_NTP_Trfase"/>
</dbReference>
<dbReference type="InterPro" id="IPR013482">
    <property type="entry name" value="Molybde_CF_guanTrfase"/>
</dbReference>
<dbReference type="InterPro" id="IPR029044">
    <property type="entry name" value="Nucleotide-diphossugar_trans"/>
</dbReference>
<dbReference type="PANTHER" id="PTHR19136">
    <property type="entry name" value="MOLYBDENUM COFACTOR GUANYLYLTRANSFERASE"/>
    <property type="match status" value="1"/>
</dbReference>
<dbReference type="PANTHER" id="PTHR19136:SF81">
    <property type="entry name" value="MOLYBDENUM COFACTOR GUANYLYLTRANSFERASE"/>
    <property type="match status" value="1"/>
</dbReference>
<dbReference type="Pfam" id="PF12804">
    <property type="entry name" value="NTP_transf_3"/>
    <property type="match status" value="1"/>
</dbReference>
<dbReference type="SUPFAM" id="SSF53448">
    <property type="entry name" value="Nucleotide-diphospho-sugar transferases"/>
    <property type="match status" value="1"/>
</dbReference>
<keyword id="KW-0963">Cytoplasm</keyword>
<keyword id="KW-0342">GTP-binding</keyword>
<keyword id="KW-0460">Magnesium</keyword>
<keyword id="KW-0479">Metal-binding</keyword>
<keyword id="KW-0501">Molybdenum cofactor biosynthesis</keyword>
<keyword id="KW-0547">Nucleotide-binding</keyword>
<keyword id="KW-1185">Reference proteome</keyword>
<keyword id="KW-0808">Transferase</keyword>
<accession>B2A242</accession>
<sequence>MTDNVSAVILAGGASRRMGTDKSMLKLKGKKMIEIVIESISDIFDELVIVSNSPEKFDYKNNDFKVVSDKLTHLKRSSLRGIYTGLTEISNEYGFIFAGDMPFISPELIKAMISEMRKDKWDIIIPVISGHYEPLFAVYHKNCHYTMKQQLLHENFKITDSLKEFKVLELTDNYCVQYDEYLASFFNINTPEDLEQARKYLGKTE</sequence>
<evidence type="ECO:0000255" key="1">
    <source>
        <dbReference type="HAMAP-Rule" id="MF_00316"/>
    </source>
</evidence>
<reference key="1">
    <citation type="submission" date="2008-04" db="EMBL/GenBank/DDBJ databases">
        <title>Complete sequence of chromosome of Natranaerobius thermophilus JW/NM-WN-LF.</title>
        <authorList>
            <consortium name="US DOE Joint Genome Institute"/>
            <person name="Copeland A."/>
            <person name="Lucas S."/>
            <person name="Lapidus A."/>
            <person name="Glavina del Rio T."/>
            <person name="Dalin E."/>
            <person name="Tice H."/>
            <person name="Bruce D."/>
            <person name="Goodwin L."/>
            <person name="Pitluck S."/>
            <person name="Chertkov O."/>
            <person name="Brettin T."/>
            <person name="Detter J.C."/>
            <person name="Han C."/>
            <person name="Kuske C.R."/>
            <person name="Schmutz J."/>
            <person name="Larimer F."/>
            <person name="Land M."/>
            <person name="Hauser L."/>
            <person name="Kyrpides N."/>
            <person name="Lykidis A."/>
            <person name="Mesbah N.M."/>
            <person name="Wiegel J."/>
        </authorList>
    </citation>
    <scope>NUCLEOTIDE SEQUENCE [LARGE SCALE GENOMIC DNA]</scope>
    <source>
        <strain>ATCC BAA-1301 / DSM 18059 / JW/NM-WN-LF</strain>
    </source>
</reference>
<organism>
    <name type="scientific">Natranaerobius thermophilus (strain ATCC BAA-1301 / DSM 18059 / JW/NM-WN-LF)</name>
    <dbReference type="NCBI Taxonomy" id="457570"/>
    <lineage>
        <taxon>Bacteria</taxon>
        <taxon>Bacillati</taxon>
        <taxon>Bacillota</taxon>
        <taxon>Clostridia</taxon>
        <taxon>Natranaerobiales</taxon>
        <taxon>Natranaerobiaceae</taxon>
        <taxon>Natranaerobius</taxon>
    </lineage>
</organism>
<name>MOBA_NATTJ</name>
<proteinExistence type="inferred from homology"/>
<protein>
    <recommendedName>
        <fullName evidence="1">Probable molybdenum cofactor guanylyltransferase</fullName>
        <shortName evidence="1">MoCo guanylyltransferase</shortName>
        <ecNumber evidence="1">2.7.7.77</ecNumber>
    </recommendedName>
    <alternativeName>
        <fullName evidence="1">GTP:molybdopterin guanylyltransferase</fullName>
    </alternativeName>
    <alternativeName>
        <fullName evidence="1">Mo-MPT guanylyltransferase</fullName>
    </alternativeName>
    <alternativeName>
        <fullName evidence="1">Molybdopterin guanylyltransferase</fullName>
    </alternativeName>
    <alternativeName>
        <fullName evidence="1">Molybdopterin-guanine dinucleotide synthase</fullName>
        <shortName evidence="1">MGD synthase</shortName>
    </alternativeName>
</protein>